<name>GLMU_MYCPA</name>
<accession>Q741V3</accession>
<protein>
    <recommendedName>
        <fullName evidence="1">Bifunctional protein GlmU</fullName>
    </recommendedName>
    <domain>
        <recommendedName>
            <fullName evidence="1">UDP-N-acetylglucosamine pyrophosphorylase</fullName>
            <ecNumber evidence="1">2.7.7.23</ecNumber>
        </recommendedName>
        <alternativeName>
            <fullName evidence="1">N-acetylglucosamine-1-phosphate uridyltransferase</fullName>
        </alternativeName>
    </domain>
    <domain>
        <recommendedName>
            <fullName evidence="1">Glucosamine-1-phosphate N-acetyltransferase</fullName>
            <ecNumber evidence="1">2.3.1.157</ecNumber>
        </recommendedName>
    </domain>
</protein>
<organism>
    <name type="scientific">Mycolicibacterium paratuberculosis (strain ATCC BAA-968 / K-10)</name>
    <name type="common">Mycobacterium paratuberculosis</name>
    <dbReference type="NCBI Taxonomy" id="262316"/>
    <lineage>
        <taxon>Bacteria</taxon>
        <taxon>Bacillati</taxon>
        <taxon>Actinomycetota</taxon>
        <taxon>Actinomycetes</taxon>
        <taxon>Mycobacteriales</taxon>
        <taxon>Mycobacteriaceae</taxon>
        <taxon>Mycobacterium</taxon>
        <taxon>Mycobacterium avium complex (MAC)</taxon>
    </lineage>
</organism>
<feature type="chain" id="PRO_0000233801" description="Bifunctional protein GlmU">
    <location>
        <begin position="1"/>
        <end position="490"/>
    </location>
</feature>
<feature type="region of interest" description="Pyrophosphorylase" evidence="1">
    <location>
        <begin position="1"/>
        <end position="241"/>
    </location>
</feature>
<feature type="region of interest" description="Linker" evidence="1">
    <location>
        <begin position="242"/>
        <end position="262"/>
    </location>
</feature>
<feature type="region of interest" description="N-acetyltransferase" evidence="1">
    <location>
        <begin position="263"/>
        <end position="490"/>
    </location>
</feature>
<feature type="region of interest" description="Disordered" evidence="2">
    <location>
        <begin position="462"/>
        <end position="490"/>
    </location>
</feature>
<feature type="compositionally biased region" description="Low complexity" evidence="2">
    <location>
        <begin position="467"/>
        <end position="490"/>
    </location>
</feature>
<feature type="active site" description="Proton acceptor" evidence="1">
    <location>
        <position position="374"/>
    </location>
</feature>
<feature type="binding site" evidence="1">
    <location>
        <begin position="12"/>
        <end position="15"/>
    </location>
    <ligand>
        <name>UDP-N-acetyl-alpha-D-glucosamine</name>
        <dbReference type="ChEBI" id="CHEBI:57705"/>
    </ligand>
</feature>
<feature type="binding site" evidence="1">
    <location>
        <position position="26"/>
    </location>
    <ligand>
        <name>UDP-N-acetyl-alpha-D-glucosamine</name>
        <dbReference type="ChEBI" id="CHEBI:57705"/>
    </ligand>
</feature>
<feature type="binding site" evidence="1">
    <location>
        <position position="83"/>
    </location>
    <ligand>
        <name>UDP-N-acetyl-alpha-D-glucosamine</name>
        <dbReference type="ChEBI" id="CHEBI:57705"/>
    </ligand>
</feature>
<feature type="binding site" evidence="1">
    <location>
        <begin position="88"/>
        <end position="89"/>
    </location>
    <ligand>
        <name>UDP-N-acetyl-alpha-D-glucosamine</name>
        <dbReference type="ChEBI" id="CHEBI:57705"/>
    </ligand>
</feature>
<feature type="binding site" evidence="1">
    <location>
        <begin position="112"/>
        <end position="114"/>
    </location>
    <ligand>
        <name>UDP-N-acetyl-alpha-D-glucosamine</name>
        <dbReference type="ChEBI" id="CHEBI:57705"/>
    </ligand>
</feature>
<feature type="binding site" evidence="1">
    <location>
        <position position="114"/>
    </location>
    <ligand>
        <name>Mg(2+)</name>
        <dbReference type="ChEBI" id="CHEBI:18420"/>
    </ligand>
</feature>
<feature type="binding site" evidence="1">
    <location>
        <position position="151"/>
    </location>
    <ligand>
        <name>UDP-N-acetyl-alpha-D-glucosamine</name>
        <dbReference type="ChEBI" id="CHEBI:57705"/>
    </ligand>
</feature>
<feature type="binding site" evidence="1">
    <location>
        <position position="166"/>
    </location>
    <ligand>
        <name>UDP-N-acetyl-alpha-D-glucosamine</name>
        <dbReference type="ChEBI" id="CHEBI:57705"/>
    </ligand>
</feature>
<feature type="binding site" evidence="1">
    <location>
        <position position="181"/>
    </location>
    <ligand>
        <name>UDP-N-acetyl-alpha-D-glucosamine</name>
        <dbReference type="ChEBI" id="CHEBI:57705"/>
    </ligand>
</feature>
<feature type="binding site" evidence="1">
    <location>
        <position position="239"/>
    </location>
    <ligand>
        <name>Mg(2+)</name>
        <dbReference type="ChEBI" id="CHEBI:18420"/>
    </ligand>
</feature>
<feature type="binding site" evidence="1">
    <location>
        <position position="239"/>
    </location>
    <ligand>
        <name>UDP-N-acetyl-alpha-D-glucosamine</name>
        <dbReference type="ChEBI" id="CHEBI:57705"/>
    </ligand>
</feature>
<feature type="binding site" evidence="1">
    <location>
        <position position="344"/>
    </location>
    <ligand>
        <name>UDP-N-acetyl-alpha-D-glucosamine</name>
        <dbReference type="ChEBI" id="CHEBI:57705"/>
    </ligand>
</feature>
<feature type="binding site" evidence="1">
    <location>
        <position position="362"/>
    </location>
    <ligand>
        <name>UDP-N-acetyl-alpha-D-glucosamine</name>
        <dbReference type="ChEBI" id="CHEBI:57705"/>
    </ligand>
</feature>
<feature type="binding site" evidence="1">
    <location>
        <position position="377"/>
    </location>
    <ligand>
        <name>UDP-N-acetyl-alpha-D-glucosamine</name>
        <dbReference type="ChEBI" id="CHEBI:57705"/>
    </ligand>
</feature>
<feature type="binding site" evidence="1">
    <location>
        <position position="388"/>
    </location>
    <ligand>
        <name>UDP-N-acetyl-alpha-D-glucosamine</name>
        <dbReference type="ChEBI" id="CHEBI:57705"/>
    </ligand>
</feature>
<feature type="binding site" evidence="1">
    <location>
        <position position="391"/>
    </location>
    <ligand>
        <name>acetyl-CoA</name>
        <dbReference type="ChEBI" id="CHEBI:57288"/>
    </ligand>
</feature>
<feature type="binding site" evidence="1">
    <location>
        <begin position="397"/>
        <end position="398"/>
    </location>
    <ligand>
        <name>acetyl-CoA</name>
        <dbReference type="ChEBI" id="CHEBI:57288"/>
    </ligand>
</feature>
<feature type="binding site" evidence="1">
    <location>
        <position position="416"/>
    </location>
    <ligand>
        <name>acetyl-CoA</name>
        <dbReference type="ChEBI" id="CHEBI:57288"/>
    </ligand>
</feature>
<feature type="binding site" evidence="1">
    <location>
        <position position="434"/>
    </location>
    <ligand>
        <name>acetyl-CoA</name>
        <dbReference type="ChEBI" id="CHEBI:57288"/>
    </ligand>
</feature>
<sequence length="490" mass="50610">MSSPGDTAVLVLAAGPGTRMRSDTPKVLHPLGGRSMLSHLLHAIAKVAPQHLAVVLGHDHERIAPLIADWADDLGRPIDVALQERPRGTGDAVRCGLSALPDDYAGVLVVTSGDTPLLDADTVADLIAGHTATRAAVTVLTTTLSDPSGYGRILRTQDNEVTAIVEHADATESQREIREVNAGVYAFDTAALRSALNRLSADNAQQELYLTDVIAILRGDGLPIRARHVDDSALVAGVNNRVQLAQLGAELNRRIVAAHQLAGVTVVDPATTWIDVDVTIGRDTVIHPGTQLLGRTQIGGHCVVGPDTTLTDVSVGDGASVVRTHGTGSSVGAGATVGPFAYLRPGTVLGDDGKLGAFVETKNATIGTGTKVPHLTYVGDADIGEHSNIGASSVFVNYDGESKRRTTVGSHVRTGSDTMFVAPVTVGDGAYTGAGTVVREDVPPGALAVSAGPQRNIEGWVRRKRPGSAAARAAEAAEKAAGGRPAGEAE</sequence>
<keyword id="KW-0012">Acyltransferase</keyword>
<keyword id="KW-0133">Cell shape</keyword>
<keyword id="KW-0961">Cell wall biogenesis/degradation</keyword>
<keyword id="KW-0963">Cytoplasm</keyword>
<keyword id="KW-0460">Magnesium</keyword>
<keyword id="KW-0479">Metal-binding</keyword>
<keyword id="KW-0511">Multifunctional enzyme</keyword>
<keyword id="KW-0548">Nucleotidyltransferase</keyword>
<keyword id="KW-0573">Peptidoglycan synthesis</keyword>
<keyword id="KW-1185">Reference proteome</keyword>
<keyword id="KW-0677">Repeat</keyword>
<keyword id="KW-0808">Transferase</keyword>
<dbReference type="EC" id="2.7.7.23" evidence="1"/>
<dbReference type="EC" id="2.3.1.157" evidence="1"/>
<dbReference type="EMBL" id="AE016958">
    <property type="protein sequence ID" value="AAS03301.1"/>
    <property type="molecule type" value="Genomic_DNA"/>
</dbReference>
<dbReference type="RefSeq" id="WP_003872738.1">
    <property type="nucleotide sequence ID" value="NZ_CP106873.1"/>
</dbReference>
<dbReference type="SMR" id="Q741V3"/>
<dbReference type="STRING" id="262316.MAP_0984c"/>
<dbReference type="KEGG" id="mpa:MAP_0984c"/>
<dbReference type="PATRIC" id="fig|262316.17.peg.1030"/>
<dbReference type="eggNOG" id="COG1207">
    <property type="taxonomic scope" value="Bacteria"/>
</dbReference>
<dbReference type="HOGENOM" id="CLU_029499_15_2_11"/>
<dbReference type="UniPathway" id="UPA00113">
    <property type="reaction ID" value="UER00532"/>
</dbReference>
<dbReference type="UniPathway" id="UPA00113">
    <property type="reaction ID" value="UER00533"/>
</dbReference>
<dbReference type="UniPathway" id="UPA00973"/>
<dbReference type="Proteomes" id="UP000000580">
    <property type="component" value="Chromosome"/>
</dbReference>
<dbReference type="GO" id="GO:0005737">
    <property type="term" value="C:cytoplasm"/>
    <property type="evidence" value="ECO:0007669"/>
    <property type="project" value="UniProtKB-SubCell"/>
</dbReference>
<dbReference type="GO" id="GO:0016020">
    <property type="term" value="C:membrane"/>
    <property type="evidence" value="ECO:0007669"/>
    <property type="project" value="GOC"/>
</dbReference>
<dbReference type="GO" id="GO:0019134">
    <property type="term" value="F:glucosamine-1-phosphate N-acetyltransferase activity"/>
    <property type="evidence" value="ECO:0007669"/>
    <property type="project" value="UniProtKB-UniRule"/>
</dbReference>
<dbReference type="GO" id="GO:0000287">
    <property type="term" value="F:magnesium ion binding"/>
    <property type="evidence" value="ECO:0007669"/>
    <property type="project" value="UniProtKB-UniRule"/>
</dbReference>
<dbReference type="GO" id="GO:0003977">
    <property type="term" value="F:UDP-N-acetylglucosamine diphosphorylase activity"/>
    <property type="evidence" value="ECO:0007669"/>
    <property type="project" value="UniProtKB-UniRule"/>
</dbReference>
<dbReference type="GO" id="GO:0000902">
    <property type="term" value="P:cell morphogenesis"/>
    <property type="evidence" value="ECO:0007669"/>
    <property type="project" value="UniProtKB-UniRule"/>
</dbReference>
<dbReference type="GO" id="GO:0071555">
    <property type="term" value="P:cell wall organization"/>
    <property type="evidence" value="ECO:0007669"/>
    <property type="project" value="UniProtKB-KW"/>
</dbReference>
<dbReference type="GO" id="GO:0009245">
    <property type="term" value="P:lipid A biosynthetic process"/>
    <property type="evidence" value="ECO:0007669"/>
    <property type="project" value="UniProtKB-UniRule"/>
</dbReference>
<dbReference type="GO" id="GO:0009252">
    <property type="term" value="P:peptidoglycan biosynthetic process"/>
    <property type="evidence" value="ECO:0007669"/>
    <property type="project" value="UniProtKB-UniRule"/>
</dbReference>
<dbReference type="GO" id="GO:0008360">
    <property type="term" value="P:regulation of cell shape"/>
    <property type="evidence" value="ECO:0007669"/>
    <property type="project" value="UniProtKB-KW"/>
</dbReference>
<dbReference type="GO" id="GO:0006048">
    <property type="term" value="P:UDP-N-acetylglucosamine biosynthetic process"/>
    <property type="evidence" value="ECO:0007669"/>
    <property type="project" value="UniProtKB-UniPathway"/>
</dbReference>
<dbReference type="CDD" id="cd02540">
    <property type="entry name" value="GT2_GlmU_N_bac"/>
    <property type="match status" value="1"/>
</dbReference>
<dbReference type="CDD" id="cd03353">
    <property type="entry name" value="LbH_GlmU_C"/>
    <property type="match status" value="1"/>
</dbReference>
<dbReference type="FunFam" id="2.160.10.10:FF:000028">
    <property type="entry name" value="Bifunctional protein GlmU"/>
    <property type="match status" value="1"/>
</dbReference>
<dbReference type="Gene3D" id="2.160.10.10">
    <property type="entry name" value="Hexapeptide repeat proteins"/>
    <property type="match status" value="1"/>
</dbReference>
<dbReference type="Gene3D" id="3.90.550.10">
    <property type="entry name" value="Spore Coat Polysaccharide Biosynthesis Protein SpsA, Chain A"/>
    <property type="match status" value="1"/>
</dbReference>
<dbReference type="HAMAP" id="MF_01631">
    <property type="entry name" value="GlmU"/>
    <property type="match status" value="1"/>
</dbReference>
<dbReference type="InterPro" id="IPR005882">
    <property type="entry name" value="Bifunctional_GlmU"/>
</dbReference>
<dbReference type="InterPro" id="IPR050065">
    <property type="entry name" value="GlmU-like"/>
</dbReference>
<dbReference type="InterPro" id="IPR038009">
    <property type="entry name" value="GlmU_C_LbH"/>
</dbReference>
<dbReference type="InterPro" id="IPR001451">
    <property type="entry name" value="Hexapep"/>
</dbReference>
<dbReference type="InterPro" id="IPR025877">
    <property type="entry name" value="MobA-like_NTP_Trfase"/>
</dbReference>
<dbReference type="InterPro" id="IPR029044">
    <property type="entry name" value="Nucleotide-diphossugar_trans"/>
</dbReference>
<dbReference type="InterPro" id="IPR011004">
    <property type="entry name" value="Trimer_LpxA-like_sf"/>
</dbReference>
<dbReference type="NCBIfam" id="TIGR01173">
    <property type="entry name" value="glmU"/>
    <property type="match status" value="1"/>
</dbReference>
<dbReference type="NCBIfam" id="NF010932">
    <property type="entry name" value="PRK14352.1"/>
    <property type="match status" value="1"/>
</dbReference>
<dbReference type="PANTHER" id="PTHR43584:SF3">
    <property type="entry name" value="BIFUNCTIONAL PROTEIN GLMU"/>
    <property type="match status" value="1"/>
</dbReference>
<dbReference type="PANTHER" id="PTHR43584">
    <property type="entry name" value="NUCLEOTIDYL TRANSFERASE"/>
    <property type="match status" value="1"/>
</dbReference>
<dbReference type="Pfam" id="PF00132">
    <property type="entry name" value="Hexapep"/>
    <property type="match status" value="1"/>
</dbReference>
<dbReference type="Pfam" id="PF12804">
    <property type="entry name" value="NTP_transf_3"/>
    <property type="match status" value="1"/>
</dbReference>
<dbReference type="SUPFAM" id="SSF53448">
    <property type="entry name" value="Nucleotide-diphospho-sugar transferases"/>
    <property type="match status" value="1"/>
</dbReference>
<dbReference type="SUPFAM" id="SSF51161">
    <property type="entry name" value="Trimeric LpxA-like enzymes"/>
    <property type="match status" value="1"/>
</dbReference>
<comment type="function">
    <text evidence="1">Catalyzes the last two sequential reactions in the de novo biosynthetic pathway for UDP-N-acetylglucosamine (UDP-GlcNAc). The C-terminal domain catalyzes the transfer of acetyl group from acetyl coenzyme A to glucosamine-1-phosphate (GlcN-1-P) to produce N-acetylglucosamine-1-phosphate (GlcNAc-1-P), which is converted into UDP-GlcNAc by the transfer of uridine 5-monophosphate (from uridine 5-triphosphate), a reaction catalyzed by the N-terminal domain.</text>
</comment>
<comment type="catalytic activity">
    <reaction evidence="1">
        <text>alpha-D-glucosamine 1-phosphate + acetyl-CoA = N-acetyl-alpha-D-glucosamine 1-phosphate + CoA + H(+)</text>
        <dbReference type="Rhea" id="RHEA:13725"/>
        <dbReference type="ChEBI" id="CHEBI:15378"/>
        <dbReference type="ChEBI" id="CHEBI:57287"/>
        <dbReference type="ChEBI" id="CHEBI:57288"/>
        <dbReference type="ChEBI" id="CHEBI:57776"/>
        <dbReference type="ChEBI" id="CHEBI:58516"/>
        <dbReference type="EC" id="2.3.1.157"/>
    </reaction>
</comment>
<comment type="catalytic activity">
    <reaction evidence="1">
        <text>N-acetyl-alpha-D-glucosamine 1-phosphate + UTP + H(+) = UDP-N-acetyl-alpha-D-glucosamine + diphosphate</text>
        <dbReference type="Rhea" id="RHEA:13509"/>
        <dbReference type="ChEBI" id="CHEBI:15378"/>
        <dbReference type="ChEBI" id="CHEBI:33019"/>
        <dbReference type="ChEBI" id="CHEBI:46398"/>
        <dbReference type="ChEBI" id="CHEBI:57705"/>
        <dbReference type="ChEBI" id="CHEBI:57776"/>
        <dbReference type="EC" id="2.7.7.23"/>
    </reaction>
</comment>
<comment type="cofactor">
    <cofactor evidence="1">
        <name>Mg(2+)</name>
        <dbReference type="ChEBI" id="CHEBI:18420"/>
    </cofactor>
    <text evidence="1">Binds 1 Mg(2+) ion per subunit.</text>
</comment>
<comment type="pathway">
    <text evidence="1">Nucleotide-sugar biosynthesis; UDP-N-acetyl-alpha-D-glucosamine biosynthesis; N-acetyl-alpha-D-glucosamine 1-phosphate from alpha-D-glucosamine 6-phosphate (route II): step 2/2.</text>
</comment>
<comment type="pathway">
    <text evidence="1">Nucleotide-sugar biosynthesis; UDP-N-acetyl-alpha-D-glucosamine biosynthesis; UDP-N-acetyl-alpha-D-glucosamine from N-acetyl-alpha-D-glucosamine 1-phosphate: step 1/1.</text>
</comment>
<comment type="pathway">
    <text evidence="1">Bacterial outer membrane biogenesis; LPS lipid A biosynthesis.</text>
</comment>
<comment type="subunit">
    <text evidence="1">Homotrimer.</text>
</comment>
<comment type="subcellular location">
    <subcellularLocation>
        <location evidence="1">Cytoplasm</location>
    </subcellularLocation>
</comment>
<comment type="similarity">
    <text evidence="1">In the N-terminal section; belongs to the N-acetylglucosamine-1-phosphate uridyltransferase family.</text>
</comment>
<comment type="similarity">
    <text evidence="1">In the C-terminal section; belongs to the transferase hexapeptide repeat family.</text>
</comment>
<proteinExistence type="inferred from homology"/>
<reference key="1">
    <citation type="journal article" date="2005" name="Proc. Natl. Acad. Sci. U.S.A.">
        <title>The complete genome sequence of Mycobacterium avium subspecies paratuberculosis.</title>
        <authorList>
            <person name="Li L."/>
            <person name="Bannantine J.P."/>
            <person name="Zhang Q."/>
            <person name="Amonsin A."/>
            <person name="May B.J."/>
            <person name="Alt D."/>
            <person name="Banerji N."/>
            <person name="Kanjilal S."/>
            <person name="Kapur V."/>
        </authorList>
    </citation>
    <scope>NUCLEOTIDE SEQUENCE [LARGE SCALE GENOMIC DNA]</scope>
    <source>
        <strain>ATCC BAA-968 / K-10</strain>
    </source>
</reference>
<gene>
    <name evidence="1" type="primary">glmU</name>
    <name type="ordered locus">MAP_0984c</name>
</gene>
<evidence type="ECO:0000255" key="1">
    <source>
        <dbReference type="HAMAP-Rule" id="MF_01631"/>
    </source>
</evidence>
<evidence type="ECO:0000256" key="2">
    <source>
        <dbReference type="SAM" id="MobiDB-lite"/>
    </source>
</evidence>